<feature type="chain" id="PRO_0000122538" description="Aminomethyltransferase">
    <location>
        <begin position="1"/>
        <end position="366"/>
    </location>
</feature>
<protein>
    <recommendedName>
        <fullName evidence="1">Aminomethyltransferase</fullName>
        <ecNumber evidence="1">2.1.2.10</ecNumber>
    </recommendedName>
    <alternativeName>
        <fullName evidence="1">Glycine cleavage system T protein</fullName>
    </alternativeName>
</protein>
<reference key="1">
    <citation type="journal article" date="2006" name="J. Bacteriol.">
        <title>Pathogenomic sequence analysis of Bacillus cereus and Bacillus thuringiensis isolates closely related to Bacillus anthracis.</title>
        <authorList>
            <person name="Han C.S."/>
            <person name="Xie G."/>
            <person name="Challacombe J.F."/>
            <person name="Altherr M.R."/>
            <person name="Bhotika S.S."/>
            <person name="Bruce D."/>
            <person name="Campbell C.S."/>
            <person name="Campbell M.L."/>
            <person name="Chen J."/>
            <person name="Chertkov O."/>
            <person name="Cleland C."/>
            <person name="Dimitrijevic M."/>
            <person name="Doggett N.A."/>
            <person name="Fawcett J.J."/>
            <person name="Glavina T."/>
            <person name="Goodwin L.A."/>
            <person name="Hill K.K."/>
            <person name="Hitchcock P."/>
            <person name="Jackson P.J."/>
            <person name="Keim P."/>
            <person name="Kewalramani A.R."/>
            <person name="Longmire J."/>
            <person name="Lucas S."/>
            <person name="Malfatti S."/>
            <person name="McMurry K."/>
            <person name="Meincke L.J."/>
            <person name="Misra M."/>
            <person name="Moseman B.L."/>
            <person name="Mundt M."/>
            <person name="Munk A.C."/>
            <person name="Okinaka R.T."/>
            <person name="Parson-Quintana B."/>
            <person name="Reilly L.P."/>
            <person name="Richardson P."/>
            <person name="Robinson D.L."/>
            <person name="Rubin E."/>
            <person name="Saunders E."/>
            <person name="Tapia R."/>
            <person name="Tesmer J.G."/>
            <person name="Thayer N."/>
            <person name="Thompson L.S."/>
            <person name="Tice H."/>
            <person name="Ticknor L.O."/>
            <person name="Wills P.L."/>
            <person name="Brettin T.S."/>
            <person name="Gilna P."/>
        </authorList>
    </citation>
    <scope>NUCLEOTIDE SEQUENCE [LARGE SCALE GENOMIC DNA]</scope>
    <source>
        <strain>ZK / E33L</strain>
    </source>
</reference>
<accession>Q634V6</accession>
<organism>
    <name type="scientific">Bacillus cereus (strain ZK / E33L)</name>
    <dbReference type="NCBI Taxonomy" id="288681"/>
    <lineage>
        <taxon>Bacteria</taxon>
        <taxon>Bacillati</taxon>
        <taxon>Bacillota</taxon>
        <taxon>Bacilli</taxon>
        <taxon>Bacillales</taxon>
        <taxon>Bacillaceae</taxon>
        <taxon>Bacillus</taxon>
        <taxon>Bacillus cereus group</taxon>
    </lineage>
</organism>
<evidence type="ECO:0000255" key="1">
    <source>
        <dbReference type="HAMAP-Rule" id="MF_00259"/>
    </source>
</evidence>
<gene>
    <name evidence="1" type="primary">gcvT</name>
    <name type="ordered locus">BCE33L3981</name>
</gene>
<sequence>MITLQRTPLFDVYAKYGGKTIDFGGWELPVQFSSIKEEHEAVRTAAGLFDVSHMGEVEVKGVDSLAFLQRVVTNDVSTLKVGGAQYTAMCYENGGTVDDLLIYKRGEEDYLLVINASNIEKDYEWLASHVIGDATVVNVSNEVAQLAIQGPKAEGILQKVVSEDLKEIKFFKFKNDILVDGIPALVSRTGYTGEDGFEIYCKSEDAAKLWEKLLEVGAEEGLKPCGLGARDTLRFEATLPLYGQELSKDITPIEAGIGFAVKPNKEADFFGKATLKEQKENGAPRKLVGIEVIERGIPRTHYPVFIGEEKIGEVTSGTQSPTLKKSIGLALIDVKYAAVDTEVEIEIRNKRVKAVVVPTPFYKRSK</sequence>
<comment type="function">
    <text evidence="1">The glycine cleavage system catalyzes the degradation of glycine.</text>
</comment>
<comment type="catalytic activity">
    <reaction evidence="1">
        <text>N(6)-[(R)-S(8)-aminomethyldihydrolipoyl]-L-lysyl-[protein] + (6S)-5,6,7,8-tetrahydrofolate = N(6)-[(R)-dihydrolipoyl]-L-lysyl-[protein] + (6R)-5,10-methylene-5,6,7,8-tetrahydrofolate + NH4(+)</text>
        <dbReference type="Rhea" id="RHEA:16945"/>
        <dbReference type="Rhea" id="RHEA-COMP:10475"/>
        <dbReference type="Rhea" id="RHEA-COMP:10492"/>
        <dbReference type="ChEBI" id="CHEBI:15636"/>
        <dbReference type="ChEBI" id="CHEBI:28938"/>
        <dbReference type="ChEBI" id="CHEBI:57453"/>
        <dbReference type="ChEBI" id="CHEBI:83100"/>
        <dbReference type="ChEBI" id="CHEBI:83143"/>
        <dbReference type="EC" id="2.1.2.10"/>
    </reaction>
</comment>
<comment type="subunit">
    <text evidence="1">The glycine cleavage system is composed of four proteins: P, T, L and H.</text>
</comment>
<comment type="similarity">
    <text evidence="1">Belongs to the GcvT family.</text>
</comment>
<keyword id="KW-0032">Aminotransferase</keyword>
<keyword id="KW-0808">Transferase</keyword>
<proteinExistence type="inferred from homology"/>
<name>GCST_BACCZ</name>
<dbReference type="EC" id="2.1.2.10" evidence="1"/>
<dbReference type="EMBL" id="CP000001">
    <property type="protein sequence ID" value="AAU16286.1"/>
    <property type="molecule type" value="Genomic_DNA"/>
</dbReference>
<dbReference type="RefSeq" id="WP_000631763.1">
    <property type="nucleotide sequence ID" value="NZ_CP009968.1"/>
</dbReference>
<dbReference type="SMR" id="Q634V6"/>
<dbReference type="KEGG" id="bcz:BCE33L3981"/>
<dbReference type="PATRIC" id="fig|288681.22.peg.1415"/>
<dbReference type="Proteomes" id="UP000002612">
    <property type="component" value="Chromosome"/>
</dbReference>
<dbReference type="GO" id="GO:0005829">
    <property type="term" value="C:cytosol"/>
    <property type="evidence" value="ECO:0007669"/>
    <property type="project" value="TreeGrafter"/>
</dbReference>
<dbReference type="GO" id="GO:0005960">
    <property type="term" value="C:glycine cleavage complex"/>
    <property type="evidence" value="ECO:0007669"/>
    <property type="project" value="InterPro"/>
</dbReference>
<dbReference type="GO" id="GO:0004047">
    <property type="term" value="F:aminomethyltransferase activity"/>
    <property type="evidence" value="ECO:0007669"/>
    <property type="project" value="UniProtKB-UniRule"/>
</dbReference>
<dbReference type="GO" id="GO:0008483">
    <property type="term" value="F:transaminase activity"/>
    <property type="evidence" value="ECO:0007669"/>
    <property type="project" value="UniProtKB-KW"/>
</dbReference>
<dbReference type="GO" id="GO:0019464">
    <property type="term" value="P:glycine decarboxylation via glycine cleavage system"/>
    <property type="evidence" value="ECO:0007669"/>
    <property type="project" value="UniProtKB-UniRule"/>
</dbReference>
<dbReference type="FunFam" id="2.40.30.110:FF:000003">
    <property type="entry name" value="Aminomethyltransferase"/>
    <property type="match status" value="1"/>
</dbReference>
<dbReference type="FunFam" id="3.30.70.1400:FF:000001">
    <property type="entry name" value="Aminomethyltransferase"/>
    <property type="match status" value="1"/>
</dbReference>
<dbReference type="FunFam" id="4.10.1250.10:FF:000001">
    <property type="entry name" value="Aminomethyltransferase"/>
    <property type="match status" value="1"/>
</dbReference>
<dbReference type="Gene3D" id="2.40.30.110">
    <property type="entry name" value="Aminomethyltransferase beta-barrel domains"/>
    <property type="match status" value="1"/>
</dbReference>
<dbReference type="Gene3D" id="3.30.70.1400">
    <property type="entry name" value="Aminomethyltransferase beta-barrel domains"/>
    <property type="match status" value="1"/>
</dbReference>
<dbReference type="Gene3D" id="4.10.1250.10">
    <property type="entry name" value="Aminomethyltransferase fragment"/>
    <property type="match status" value="1"/>
</dbReference>
<dbReference type="Gene3D" id="3.30.1360.120">
    <property type="entry name" value="Probable tRNA modification gtpase trme, domain 1"/>
    <property type="match status" value="1"/>
</dbReference>
<dbReference type="HAMAP" id="MF_00259">
    <property type="entry name" value="GcvT"/>
    <property type="match status" value="1"/>
</dbReference>
<dbReference type="InterPro" id="IPR006223">
    <property type="entry name" value="GCS_T"/>
</dbReference>
<dbReference type="InterPro" id="IPR022903">
    <property type="entry name" value="GCS_T_bac"/>
</dbReference>
<dbReference type="InterPro" id="IPR013977">
    <property type="entry name" value="GCST_C"/>
</dbReference>
<dbReference type="InterPro" id="IPR006222">
    <property type="entry name" value="GCV_T_N"/>
</dbReference>
<dbReference type="InterPro" id="IPR028896">
    <property type="entry name" value="GcvT/YgfZ/DmdA"/>
</dbReference>
<dbReference type="InterPro" id="IPR029043">
    <property type="entry name" value="GcvT/YgfZ_C"/>
</dbReference>
<dbReference type="InterPro" id="IPR027266">
    <property type="entry name" value="TrmE/GcvT_dom1"/>
</dbReference>
<dbReference type="NCBIfam" id="TIGR00528">
    <property type="entry name" value="gcvT"/>
    <property type="match status" value="1"/>
</dbReference>
<dbReference type="NCBIfam" id="NF001567">
    <property type="entry name" value="PRK00389.1"/>
    <property type="match status" value="1"/>
</dbReference>
<dbReference type="PANTHER" id="PTHR43757">
    <property type="entry name" value="AMINOMETHYLTRANSFERASE"/>
    <property type="match status" value="1"/>
</dbReference>
<dbReference type="PANTHER" id="PTHR43757:SF2">
    <property type="entry name" value="AMINOMETHYLTRANSFERASE, MITOCHONDRIAL"/>
    <property type="match status" value="1"/>
</dbReference>
<dbReference type="Pfam" id="PF01571">
    <property type="entry name" value="GCV_T"/>
    <property type="match status" value="1"/>
</dbReference>
<dbReference type="Pfam" id="PF08669">
    <property type="entry name" value="GCV_T_C"/>
    <property type="match status" value="1"/>
</dbReference>
<dbReference type="PIRSF" id="PIRSF006487">
    <property type="entry name" value="GcvT"/>
    <property type="match status" value="1"/>
</dbReference>
<dbReference type="SUPFAM" id="SSF101790">
    <property type="entry name" value="Aminomethyltransferase beta-barrel domain"/>
    <property type="match status" value="1"/>
</dbReference>
<dbReference type="SUPFAM" id="SSF103025">
    <property type="entry name" value="Folate-binding domain"/>
    <property type="match status" value="1"/>
</dbReference>